<proteinExistence type="inferred from homology"/>
<keyword id="KW-0012">Acyltransferase</keyword>
<keyword id="KW-0133">Cell shape</keyword>
<keyword id="KW-0961">Cell wall biogenesis/degradation</keyword>
<keyword id="KW-0963">Cytoplasm</keyword>
<keyword id="KW-0460">Magnesium</keyword>
<keyword id="KW-0479">Metal-binding</keyword>
<keyword id="KW-0511">Multifunctional enzyme</keyword>
<keyword id="KW-0548">Nucleotidyltransferase</keyword>
<keyword id="KW-0573">Peptidoglycan synthesis</keyword>
<keyword id="KW-0677">Repeat</keyword>
<keyword id="KW-0808">Transferase</keyword>
<accession>B2I2B5</accession>
<name>GLMU_ACIBC</name>
<protein>
    <recommendedName>
        <fullName evidence="1">Bifunctional protein GlmU</fullName>
    </recommendedName>
    <domain>
        <recommendedName>
            <fullName evidence="1">UDP-N-acetylglucosamine pyrophosphorylase</fullName>
            <ecNumber evidence="1">2.7.7.23</ecNumber>
        </recommendedName>
        <alternativeName>
            <fullName evidence="1">N-acetylglucosamine-1-phosphate uridyltransferase</fullName>
        </alternativeName>
    </domain>
    <domain>
        <recommendedName>
            <fullName evidence="1">Glucosamine-1-phosphate N-acetyltransferase</fullName>
            <ecNumber evidence="1">2.3.1.157</ecNumber>
        </recommendedName>
    </domain>
</protein>
<evidence type="ECO:0000255" key="1">
    <source>
        <dbReference type="HAMAP-Rule" id="MF_01631"/>
    </source>
</evidence>
<organism>
    <name type="scientific">Acinetobacter baumannii (strain ACICU)</name>
    <dbReference type="NCBI Taxonomy" id="405416"/>
    <lineage>
        <taxon>Bacteria</taxon>
        <taxon>Pseudomonadati</taxon>
        <taxon>Pseudomonadota</taxon>
        <taxon>Gammaproteobacteria</taxon>
        <taxon>Moraxellales</taxon>
        <taxon>Moraxellaceae</taxon>
        <taxon>Acinetobacter</taxon>
        <taxon>Acinetobacter calcoaceticus/baumannii complex</taxon>
    </lineage>
</organism>
<gene>
    <name evidence="1" type="primary">glmU</name>
    <name type="ordered locus">ACICU_03593</name>
</gene>
<sequence length="454" mass="48867">MSTTVIILAAGKGTRMRSQLPKVLQPLAGRPLLGHVIKTAKQLLAENIITIYGHGGDHVKKTFAQENIQWVEQAEQLGTGHAVQMTLPVLPKDGISLILYGDVPLVRQTTLEQLIEVSNKTGIGMITLHVDNPTGYGRIVRQDGKIQAIVEHKDATEAQRQIQEINTGIYCVSNAKLHEWLPKLSNENAQGEYYLTDIVAMAVADGLEIASIQPELAFEVEGVNDRLQLAALEREFQKQQAKELMQQGVTFADPARFDLRGTVKVGHDVRIDVNVIIEGDCELGDFVEIGAGCILKNTTIAAGTKVQAYSVFDGAVVGENTQIGPFARLRPGAKLANEVHIGNFVEVKNTTIGLGSKANHFTYLGDAEIGAESNIGAGTITCNYDGANKHKTTIGDAVFIGSNSSLVAPVTIGNGATVGAGSVITKDVAEQSLSFERAQQISKANYQRPQKLKK</sequence>
<comment type="function">
    <text evidence="1">Catalyzes the last two sequential reactions in the de novo biosynthetic pathway for UDP-N-acetylglucosamine (UDP-GlcNAc). The C-terminal domain catalyzes the transfer of acetyl group from acetyl coenzyme A to glucosamine-1-phosphate (GlcN-1-P) to produce N-acetylglucosamine-1-phosphate (GlcNAc-1-P), which is converted into UDP-GlcNAc by the transfer of uridine 5-monophosphate (from uridine 5-triphosphate), a reaction catalyzed by the N-terminal domain.</text>
</comment>
<comment type="catalytic activity">
    <reaction evidence="1">
        <text>alpha-D-glucosamine 1-phosphate + acetyl-CoA = N-acetyl-alpha-D-glucosamine 1-phosphate + CoA + H(+)</text>
        <dbReference type="Rhea" id="RHEA:13725"/>
        <dbReference type="ChEBI" id="CHEBI:15378"/>
        <dbReference type="ChEBI" id="CHEBI:57287"/>
        <dbReference type="ChEBI" id="CHEBI:57288"/>
        <dbReference type="ChEBI" id="CHEBI:57776"/>
        <dbReference type="ChEBI" id="CHEBI:58516"/>
        <dbReference type="EC" id="2.3.1.157"/>
    </reaction>
</comment>
<comment type="catalytic activity">
    <reaction evidence="1">
        <text>N-acetyl-alpha-D-glucosamine 1-phosphate + UTP + H(+) = UDP-N-acetyl-alpha-D-glucosamine + diphosphate</text>
        <dbReference type="Rhea" id="RHEA:13509"/>
        <dbReference type="ChEBI" id="CHEBI:15378"/>
        <dbReference type="ChEBI" id="CHEBI:33019"/>
        <dbReference type="ChEBI" id="CHEBI:46398"/>
        <dbReference type="ChEBI" id="CHEBI:57705"/>
        <dbReference type="ChEBI" id="CHEBI:57776"/>
        <dbReference type="EC" id="2.7.7.23"/>
    </reaction>
</comment>
<comment type="cofactor">
    <cofactor evidence="1">
        <name>Mg(2+)</name>
        <dbReference type="ChEBI" id="CHEBI:18420"/>
    </cofactor>
    <text evidence="1">Binds 1 Mg(2+) ion per subunit.</text>
</comment>
<comment type="pathway">
    <text evidence="1">Nucleotide-sugar biosynthesis; UDP-N-acetyl-alpha-D-glucosamine biosynthesis; N-acetyl-alpha-D-glucosamine 1-phosphate from alpha-D-glucosamine 6-phosphate (route II): step 2/2.</text>
</comment>
<comment type="pathway">
    <text evidence="1">Nucleotide-sugar biosynthesis; UDP-N-acetyl-alpha-D-glucosamine biosynthesis; UDP-N-acetyl-alpha-D-glucosamine from N-acetyl-alpha-D-glucosamine 1-phosphate: step 1/1.</text>
</comment>
<comment type="pathway">
    <text evidence="1">Bacterial outer membrane biogenesis; LPS lipid A biosynthesis.</text>
</comment>
<comment type="subunit">
    <text evidence="1">Homotrimer.</text>
</comment>
<comment type="subcellular location">
    <subcellularLocation>
        <location evidence="1">Cytoplasm</location>
    </subcellularLocation>
</comment>
<comment type="similarity">
    <text evidence="1">In the N-terminal section; belongs to the N-acetylglucosamine-1-phosphate uridyltransferase family.</text>
</comment>
<comment type="similarity">
    <text evidence="1">In the C-terminal section; belongs to the transferase hexapeptide repeat family.</text>
</comment>
<reference key="1">
    <citation type="journal article" date="2008" name="Antimicrob. Agents Chemother.">
        <title>Whole-genome pyrosequencing of an epidemic multidrug-resistant Acinetobacter baumannii strain belonging to the European clone II group.</title>
        <authorList>
            <person name="Iacono M."/>
            <person name="Villa L."/>
            <person name="Fortini D."/>
            <person name="Bordoni R."/>
            <person name="Imperi F."/>
            <person name="Bonnal R.J."/>
            <person name="Sicheritz-Ponten T."/>
            <person name="De Bellis G."/>
            <person name="Visca P."/>
            <person name="Cassone A."/>
            <person name="Carattoli A."/>
        </authorList>
    </citation>
    <scope>NUCLEOTIDE SEQUENCE [LARGE SCALE GENOMIC DNA]</scope>
    <source>
        <strain>ACICU</strain>
    </source>
</reference>
<feature type="chain" id="PRO_1000186381" description="Bifunctional protein GlmU">
    <location>
        <begin position="1"/>
        <end position="454"/>
    </location>
</feature>
<feature type="region of interest" description="Pyrophosphorylase" evidence="1">
    <location>
        <begin position="1"/>
        <end position="226"/>
    </location>
</feature>
<feature type="region of interest" description="Linker" evidence="1">
    <location>
        <begin position="227"/>
        <end position="247"/>
    </location>
</feature>
<feature type="region of interest" description="N-acetyltransferase" evidence="1">
    <location>
        <begin position="248"/>
        <end position="454"/>
    </location>
</feature>
<feature type="active site" description="Proton acceptor" evidence="1">
    <location>
        <position position="360"/>
    </location>
</feature>
<feature type="binding site" evidence="1">
    <location>
        <begin position="8"/>
        <end position="11"/>
    </location>
    <ligand>
        <name>UDP-N-acetyl-alpha-D-glucosamine</name>
        <dbReference type="ChEBI" id="CHEBI:57705"/>
    </ligand>
</feature>
<feature type="binding site" evidence="1">
    <location>
        <position position="22"/>
    </location>
    <ligand>
        <name>UDP-N-acetyl-alpha-D-glucosamine</name>
        <dbReference type="ChEBI" id="CHEBI:57705"/>
    </ligand>
</feature>
<feature type="binding site" evidence="1">
    <location>
        <position position="73"/>
    </location>
    <ligand>
        <name>UDP-N-acetyl-alpha-D-glucosamine</name>
        <dbReference type="ChEBI" id="CHEBI:57705"/>
    </ligand>
</feature>
<feature type="binding site" evidence="1">
    <location>
        <begin position="78"/>
        <end position="79"/>
    </location>
    <ligand>
        <name>UDP-N-acetyl-alpha-D-glucosamine</name>
        <dbReference type="ChEBI" id="CHEBI:57705"/>
    </ligand>
</feature>
<feature type="binding site" evidence="1">
    <location>
        <begin position="100"/>
        <end position="102"/>
    </location>
    <ligand>
        <name>UDP-N-acetyl-alpha-D-glucosamine</name>
        <dbReference type="ChEBI" id="CHEBI:57705"/>
    </ligand>
</feature>
<feature type="binding site" evidence="1">
    <location>
        <position position="102"/>
    </location>
    <ligand>
        <name>Mg(2+)</name>
        <dbReference type="ChEBI" id="CHEBI:18420"/>
    </ligand>
</feature>
<feature type="binding site" evidence="1">
    <location>
        <position position="137"/>
    </location>
    <ligand>
        <name>UDP-N-acetyl-alpha-D-glucosamine</name>
        <dbReference type="ChEBI" id="CHEBI:57705"/>
    </ligand>
</feature>
<feature type="binding site" evidence="1">
    <location>
        <position position="151"/>
    </location>
    <ligand>
        <name>UDP-N-acetyl-alpha-D-glucosamine</name>
        <dbReference type="ChEBI" id="CHEBI:57705"/>
    </ligand>
</feature>
<feature type="binding site" evidence="1">
    <location>
        <position position="166"/>
    </location>
    <ligand>
        <name>UDP-N-acetyl-alpha-D-glucosamine</name>
        <dbReference type="ChEBI" id="CHEBI:57705"/>
    </ligand>
</feature>
<feature type="binding site" evidence="1">
    <location>
        <position position="224"/>
    </location>
    <ligand>
        <name>Mg(2+)</name>
        <dbReference type="ChEBI" id="CHEBI:18420"/>
    </ligand>
</feature>
<feature type="binding site" evidence="1">
    <location>
        <position position="224"/>
    </location>
    <ligand>
        <name>UDP-N-acetyl-alpha-D-glucosamine</name>
        <dbReference type="ChEBI" id="CHEBI:57705"/>
    </ligand>
</feature>
<feature type="binding site" evidence="1">
    <location>
        <position position="330"/>
    </location>
    <ligand>
        <name>UDP-N-acetyl-alpha-D-glucosamine</name>
        <dbReference type="ChEBI" id="CHEBI:57705"/>
    </ligand>
</feature>
<feature type="binding site" evidence="1">
    <location>
        <position position="348"/>
    </location>
    <ligand>
        <name>UDP-N-acetyl-alpha-D-glucosamine</name>
        <dbReference type="ChEBI" id="CHEBI:57705"/>
    </ligand>
</feature>
<feature type="binding site" evidence="1">
    <location>
        <position position="363"/>
    </location>
    <ligand>
        <name>UDP-N-acetyl-alpha-D-glucosamine</name>
        <dbReference type="ChEBI" id="CHEBI:57705"/>
    </ligand>
</feature>
<feature type="binding site" evidence="1">
    <location>
        <position position="374"/>
    </location>
    <ligand>
        <name>UDP-N-acetyl-alpha-D-glucosamine</name>
        <dbReference type="ChEBI" id="CHEBI:57705"/>
    </ligand>
</feature>
<feature type="binding site" evidence="1">
    <location>
        <position position="377"/>
    </location>
    <ligand>
        <name>acetyl-CoA</name>
        <dbReference type="ChEBI" id="CHEBI:57288"/>
    </ligand>
</feature>
<feature type="binding site" evidence="1">
    <location>
        <begin position="383"/>
        <end position="384"/>
    </location>
    <ligand>
        <name>acetyl-CoA</name>
        <dbReference type="ChEBI" id="CHEBI:57288"/>
    </ligand>
</feature>
<feature type="binding site" evidence="1">
    <location>
        <position position="402"/>
    </location>
    <ligand>
        <name>acetyl-CoA</name>
        <dbReference type="ChEBI" id="CHEBI:57288"/>
    </ligand>
</feature>
<feature type="binding site" evidence="1">
    <location>
        <position position="420"/>
    </location>
    <ligand>
        <name>acetyl-CoA</name>
        <dbReference type="ChEBI" id="CHEBI:57288"/>
    </ligand>
</feature>
<feature type="binding site" evidence="1">
    <location>
        <position position="437"/>
    </location>
    <ligand>
        <name>acetyl-CoA</name>
        <dbReference type="ChEBI" id="CHEBI:57288"/>
    </ligand>
</feature>
<dbReference type="EC" id="2.7.7.23" evidence="1"/>
<dbReference type="EC" id="2.3.1.157" evidence="1"/>
<dbReference type="EMBL" id="CP000863">
    <property type="protein sequence ID" value="ACC58902.1"/>
    <property type="molecule type" value="Genomic_DNA"/>
</dbReference>
<dbReference type="RefSeq" id="WP_000108584.1">
    <property type="nucleotide sequence ID" value="NZ_CP031380.1"/>
</dbReference>
<dbReference type="SMR" id="B2I2B5"/>
<dbReference type="GeneID" id="92895635"/>
<dbReference type="KEGG" id="abc:ACICU_03593"/>
<dbReference type="HOGENOM" id="CLU_029499_15_2_6"/>
<dbReference type="UniPathway" id="UPA00113">
    <property type="reaction ID" value="UER00532"/>
</dbReference>
<dbReference type="UniPathway" id="UPA00113">
    <property type="reaction ID" value="UER00533"/>
</dbReference>
<dbReference type="UniPathway" id="UPA00973"/>
<dbReference type="PHI-base" id="PHI:8042"/>
<dbReference type="Proteomes" id="UP000008839">
    <property type="component" value="Chromosome"/>
</dbReference>
<dbReference type="GO" id="GO:0005737">
    <property type="term" value="C:cytoplasm"/>
    <property type="evidence" value="ECO:0007669"/>
    <property type="project" value="UniProtKB-SubCell"/>
</dbReference>
<dbReference type="GO" id="GO:0016020">
    <property type="term" value="C:membrane"/>
    <property type="evidence" value="ECO:0007669"/>
    <property type="project" value="GOC"/>
</dbReference>
<dbReference type="GO" id="GO:0019134">
    <property type="term" value="F:glucosamine-1-phosphate N-acetyltransferase activity"/>
    <property type="evidence" value="ECO:0007669"/>
    <property type="project" value="UniProtKB-UniRule"/>
</dbReference>
<dbReference type="GO" id="GO:0000287">
    <property type="term" value="F:magnesium ion binding"/>
    <property type="evidence" value="ECO:0007669"/>
    <property type="project" value="UniProtKB-UniRule"/>
</dbReference>
<dbReference type="GO" id="GO:0003977">
    <property type="term" value="F:UDP-N-acetylglucosamine diphosphorylase activity"/>
    <property type="evidence" value="ECO:0007669"/>
    <property type="project" value="UniProtKB-UniRule"/>
</dbReference>
<dbReference type="GO" id="GO:0000902">
    <property type="term" value="P:cell morphogenesis"/>
    <property type="evidence" value="ECO:0007669"/>
    <property type="project" value="UniProtKB-UniRule"/>
</dbReference>
<dbReference type="GO" id="GO:0071555">
    <property type="term" value="P:cell wall organization"/>
    <property type="evidence" value="ECO:0007669"/>
    <property type="project" value="UniProtKB-KW"/>
</dbReference>
<dbReference type="GO" id="GO:0009245">
    <property type="term" value="P:lipid A biosynthetic process"/>
    <property type="evidence" value="ECO:0007669"/>
    <property type="project" value="UniProtKB-UniRule"/>
</dbReference>
<dbReference type="GO" id="GO:0009252">
    <property type="term" value="P:peptidoglycan biosynthetic process"/>
    <property type="evidence" value="ECO:0007669"/>
    <property type="project" value="UniProtKB-UniRule"/>
</dbReference>
<dbReference type="GO" id="GO:0008360">
    <property type="term" value="P:regulation of cell shape"/>
    <property type="evidence" value="ECO:0007669"/>
    <property type="project" value="UniProtKB-KW"/>
</dbReference>
<dbReference type="GO" id="GO:0006048">
    <property type="term" value="P:UDP-N-acetylglucosamine biosynthetic process"/>
    <property type="evidence" value="ECO:0007669"/>
    <property type="project" value="UniProtKB-UniPathway"/>
</dbReference>
<dbReference type="CDD" id="cd02540">
    <property type="entry name" value="GT2_GlmU_N_bac"/>
    <property type="match status" value="1"/>
</dbReference>
<dbReference type="CDD" id="cd03353">
    <property type="entry name" value="LbH_GlmU_C"/>
    <property type="match status" value="1"/>
</dbReference>
<dbReference type="Gene3D" id="2.160.10.10">
    <property type="entry name" value="Hexapeptide repeat proteins"/>
    <property type="match status" value="1"/>
</dbReference>
<dbReference type="Gene3D" id="3.90.550.10">
    <property type="entry name" value="Spore Coat Polysaccharide Biosynthesis Protein SpsA, Chain A"/>
    <property type="match status" value="1"/>
</dbReference>
<dbReference type="HAMAP" id="MF_01631">
    <property type="entry name" value="GlmU"/>
    <property type="match status" value="1"/>
</dbReference>
<dbReference type="InterPro" id="IPR005882">
    <property type="entry name" value="Bifunctional_GlmU"/>
</dbReference>
<dbReference type="InterPro" id="IPR050065">
    <property type="entry name" value="GlmU-like"/>
</dbReference>
<dbReference type="InterPro" id="IPR038009">
    <property type="entry name" value="GlmU_C_LbH"/>
</dbReference>
<dbReference type="InterPro" id="IPR001451">
    <property type="entry name" value="Hexapep"/>
</dbReference>
<dbReference type="InterPro" id="IPR018357">
    <property type="entry name" value="Hexapep_transf_CS"/>
</dbReference>
<dbReference type="InterPro" id="IPR025877">
    <property type="entry name" value="MobA-like_NTP_Trfase"/>
</dbReference>
<dbReference type="InterPro" id="IPR029044">
    <property type="entry name" value="Nucleotide-diphossugar_trans"/>
</dbReference>
<dbReference type="InterPro" id="IPR011004">
    <property type="entry name" value="Trimer_LpxA-like_sf"/>
</dbReference>
<dbReference type="NCBIfam" id="TIGR01173">
    <property type="entry name" value="glmU"/>
    <property type="match status" value="1"/>
</dbReference>
<dbReference type="NCBIfam" id="NF010933">
    <property type="entry name" value="PRK14353.1"/>
    <property type="match status" value="1"/>
</dbReference>
<dbReference type="PANTHER" id="PTHR43584:SF3">
    <property type="entry name" value="BIFUNCTIONAL PROTEIN GLMU"/>
    <property type="match status" value="1"/>
</dbReference>
<dbReference type="PANTHER" id="PTHR43584">
    <property type="entry name" value="NUCLEOTIDYL TRANSFERASE"/>
    <property type="match status" value="1"/>
</dbReference>
<dbReference type="Pfam" id="PF00132">
    <property type="entry name" value="Hexapep"/>
    <property type="match status" value="2"/>
</dbReference>
<dbReference type="Pfam" id="PF12804">
    <property type="entry name" value="NTP_transf_3"/>
    <property type="match status" value="1"/>
</dbReference>
<dbReference type="SUPFAM" id="SSF53448">
    <property type="entry name" value="Nucleotide-diphospho-sugar transferases"/>
    <property type="match status" value="1"/>
</dbReference>
<dbReference type="SUPFAM" id="SSF51161">
    <property type="entry name" value="Trimeric LpxA-like enzymes"/>
    <property type="match status" value="1"/>
</dbReference>
<dbReference type="PROSITE" id="PS00101">
    <property type="entry name" value="HEXAPEP_TRANSFERASES"/>
    <property type="match status" value="1"/>
</dbReference>